<name>CWH36_YEAST</name>
<evidence type="ECO:0000256" key="1">
    <source>
        <dbReference type="SAM" id="MobiDB-lite"/>
    </source>
</evidence>
<evidence type="ECO:0000305" key="2"/>
<evidence type="ECO:0000305" key="3">
    <source>
    </source>
</evidence>
<evidence type="ECO:0000305" key="4">
    <source>
    </source>
</evidence>
<evidence type="ECO:0000305" key="5">
    <source>
    </source>
</evidence>
<organism>
    <name type="scientific">Saccharomyces cerevisiae (strain ATCC 204508 / S288c)</name>
    <name type="common">Baker's yeast</name>
    <dbReference type="NCBI Taxonomy" id="559292"/>
    <lineage>
        <taxon>Eukaryota</taxon>
        <taxon>Fungi</taxon>
        <taxon>Dikarya</taxon>
        <taxon>Ascomycota</taxon>
        <taxon>Saccharomycotina</taxon>
        <taxon>Saccharomycetes</taxon>
        <taxon>Saccharomycetales</taxon>
        <taxon>Saccharomycetaceae</taxon>
        <taxon>Saccharomyces</taxon>
    </lineage>
</organism>
<reference key="1">
    <citation type="journal article" date="1992" name="Nature">
        <title>The complete DNA sequence of yeast chromosome III.</title>
        <authorList>
            <person name="Oliver S.G."/>
            <person name="van der Aart Q.J.M."/>
            <person name="Agostoni-Carbone M.L."/>
            <person name="Aigle M."/>
            <person name="Alberghina L."/>
            <person name="Alexandraki D."/>
            <person name="Antoine G."/>
            <person name="Anwar R."/>
            <person name="Ballesta J.P.G."/>
            <person name="Benit P."/>
            <person name="Berben G."/>
            <person name="Bergantino E."/>
            <person name="Biteau N."/>
            <person name="Bolle P.-A."/>
            <person name="Bolotin-Fukuhara M."/>
            <person name="Brown A."/>
            <person name="Brown A.J.P."/>
            <person name="Buhler J.-M."/>
            <person name="Carcano C."/>
            <person name="Carignani G."/>
            <person name="Cederberg H."/>
            <person name="Chanet R."/>
            <person name="Contreras R."/>
            <person name="Crouzet M."/>
            <person name="Daignan-Fornier B."/>
            <person name="Defoor E."/>
            <person name="Delgado M.D."/>
            <person name="Demolder J."/>
            <person name="Doira C."/>
            <person name="Dubois E."/>
            <person name="Dujon B."/>
            <person name="Duesterhoeft A."/>
            <person name="Erdmann D."/>
            <person name="Esteban M."/>
            <person name="Fabre F."/>
            <person name="Fairhead C."/>
            <person name="Faye G."/>
            <person name="Feldmann H."/>
            <person name="Fiers W."/>
            <person name="Francingues-Gaillard M.-C."/>
            <person name="Franco L."/>
            <person name="Frontali L."/>
            <person name="Fukuhara H."/>
            <person name="Fuller L.J."/>
            <person name="Galland P."/>
            <person name="Gent M.E."/>
            <person name="Gigot D."/>
            <person name="Gilliquet V."/>
            <person name="Glansdorff N."/>
            <person name="Goffeau A."/>
            <person name="Grenson M."/>
            <person name="Grisanti P."/>
            <person name="Grivell L.A."/>
            <person name="de Haan M."/>
            <person name="Haasemann M."/>
            <person name="Hatat D."/>
            <person name="Hoenicka J."/>
            <person name="Hegemann J.H."/>
            <person name="Herbert C.J."/>
            <person name="Hilger F."/>
            <person name="Hohmann S."/>
            <person name="Hollenberg C.P."/>
            <person name="Huse K."/>
            <person name="Iborra F."/>
            <person name="Indge K.J."/>
            <person name="Isono K."/>
            <person name="Jacq C."/>
            <person name="Jacquet M."/>
            <person name="James C.M."/>
            <person name="Jauniaux J.-C."/>
            <person name="Jia Y."/>
            <person name="Jimenez A."/>
            <person name="Kelly A."/>
            <person name="Kleinhans U."/>
            <person name="Kreisl P."/>
            <person name="Lanfranchi G."/>
            <person name="Lewis C."/>
            <person name="van der Linden C.G."/>
            <person name="Lucchini G."/>
            <person name="Lutzenkirchen K."/>
            <person name="Maat M.J."/>
            <person name="Mallet L."/>
            <person name="Mannhaupt G."/>
            <person name="Martegani E."/>
            <person name="Mathieu A."/>
            <person name="Maurer C.T.C."/>
            <person name="McConnell D."/>
            <person name="McKee R.A."/>
            <person name="Messenguy F."/>
            <person name="Mewes H.-W."/>
            <person name="Molemans F."/>
            <person name="Montague M.A."/>
            <person name="Muzi Falconi M."/>
            <person name="Navas L."/>
            <person name="Newlon C.S."/>
            <person name="Noone D."/>
            <person name="Pallier C."/>
            <person name="Panzeri L."/>
            <person name="Pearson B.M."/>
            <person name="Perea J."/>
            <person name="Philippsen P."/>
            <person name="Pierard A."/>
            <person name="Planta R.J."/>
            <person name="Plevani P."/>
            <person name="Poetsch B."/>
            <person name="Pohl F.M."/>
            <person name="Purnelle B."/>
            <person name="Ramezani Rad M."/>
            <person name="Rasmussen S.W."/>
            <person name="Raynal A."/>
            <person name="Remacha M.A."/>
            <person name="Richterich P."/>
            <person name="Roberts A.B."/>
            <person name="Rodriguez F."/>
            <person name="Sanz E."/>
            <person name="Schaaff-Gerstenschlaeger I."/>
            <person name="Scherens B."/>
            <person name="Schweitzer B."/>
            <person name="Shu Y."/>
            <person name="Skala J."/>
            <person name="Slonimski P.P."/>
            <person name="Sor F."/>
            <person name="Soustelle C."/>
            <person name="Spiegelberg R."/>
            <person name="Stateva L.I."/>
            <person name="Steensma H.Y."/>
            <person name="Steiner S."/>
            <person name="Thierry A."/>
            <person name="Thireos G."/>
            <person name="Tzermia M."/>
            <person name="Urrestarazu L.A."/>
            <person name="Valle G."/>
            <person name="Vetter I."/>
            <person name="van Vliet-Reedijk J.C."/>
            <person name="Voet M."/>
            <person name="Volckaert G."/>
            <person name="Vreken P."/>
            <person name="Wang H."/>
            <person name="Warmington J.R."/>
            <person name="von Wettstein D."/>
            <person name="Wicksteed B.L."/>
            <person name="Wilson C."/>
            <person name="Wurst H."/>
            <person name="Xu G."/>
            <person name="Yoshikawa A."/>
            <person name="Zimmermann F.K."/>
            <person name="Sgouros J.G."/>
        </authorList>
    </citation>
    <scope>NUCLEOTIDE SEQUENCE [LARGE SCALE GENOMIC DNA]</scope>
    <source>
        <strain>ATCC 204508 / S288c</strain>
    </source>
</reference>
<reference key="2">
    <citation type="journal article" date="2014" name="G3 (Bethesda)">
        <title>The reference genome sequence of Saccharomyces cerevisiae: Then and now.</title>
        <authorList>
            <person name="Engel S.R."/>
            <person name="Dietrich F.S."/>
            <person name="Fisk D.G."/>
            <person name="Binkley G."/>
            <person name="Balakrishnan R."/>
            <person name="Costanzo M.C."/>
            <person name="Dwight S.S."/>
            <person name="Hitz B.C."/>
            <person name="Karra K."/>
            <person name="Nash R.S."/>
            <person name="Weng S."/>
            <person name="Wong E.D."/>
            <person name="Lloyd P."/>
            <person name="Skrzypek M.S."/>
            <person name="Miyasato S.R."/>
            <person name="Simison M."/>
            <person name="Cherry J.M."/>
        </authorList>
    </citation>
    <scope>GENOME REANNOTATION</scope>
    <source>
        <strain>ATCC 204508 / S288c</strain>
    </source>
</reference>
<reference key="3">
    <citation type="journal article" date="1994" name="Yeast">
        <title>A new approach for isolating cell wall mutants in Saccharomyces cerevisiae by screening for hypersensitivity to calcofluor white.</title>
        <authorList>
            <person name="Ram A.F."/>
            <person name="Wolters A."/>
            <person name="Ten Hoopen R."/>
            <person name="Klis F.M."/>
        </authorList>
    </citation>
    <scope>FUNCTION</scope>
</reference>
<reference key="4">
    <citation type="journal article" date="2004" name="J. Biol. Chem.">
        <title>Genome-wide analysis of iron-dependent growth reveals a novel yeast gene required for vacuolar acidification.</title>
        <authorList>
            <person name="Davis-Kaplan S.R."/>
            <person name="McVey Ward D."/>
            <person name="Shiflett S.L."/>
            <person name="Kaplan J."/>
        </authorList>
    </citation>
    <scope>REVISION OF FUNCTION</scope>
</reference>
<gene>
    <name type="primary">CWH36</name>
    <name type="ordered locus">YCL007C</name>
    <name type="ORF">YCL7C</name>
</gene>
<protein>
    <recommendedName>
        <fullName>Putative uncharacterized protein CWH36</fullName>
    </recommendedName>
</protein>
<feature type="chain" id="PRO_0000079617" description="Putative uncharacterized protein CWH36">
    <location>
        <begin position="1"/>
        <end position="130"/>
    </location>
</feature>
<feature type="region of interest" description="Disordered" evidence="1">
    <location>
        <begin position="1"/>
        <end position="28"/>
    </location>
</feature>
<feature type="compositionally biased region" description="Polar residues" evidence="1">
    <location>
        <begin position="17"/>
        <end position="28"/>
    </location>
</feature>
<dbReference type="EMBL" id="X59720">
    <property type="protein sequence ID" value="CAA42352.1"/>
    <property type="molecule type" value="Genomic_DNA"/>
</dbReference>
<dbReference type="PIR" id="S19409">
    <property type="entry name" value="S19409"/>
</dbReference>
<dbReference type="SMR" id="P25603"/>
<dbReference type="DIP" id="DIP-5350N"/>
<dbReference type="IntAct" id="P25603">
    <property type="interactions" value="1"/>
</dbReference>
<dbReference type="STRING" id="4932.YCL007C"/>
<dbReference type="PaxDb" id="4932-YCL007C"/>
<dbReference type="EnsemblFungi" id="YCL007C_mRNA">
    <property type="protein sequence ID" value="YCL007C"/>
    <property type="gene ID" value="YCL007C"/>
</dbReference>
<dbReference type="AGR" id="SGD:S000000513"/>
<dbReference type="SGD" id="S000000513">
    <property type="gene designation" value="YCL007C"/>
</dbReference>
<dbReference type="HOGENOM" id="CLU_1939740_0_0_1"/>
<comment type="miscellaneous">
    <text evidence="2">Almost completely overlaps VMA9.</text>
</comment>
<comment type="caution">
    <text evidence="3 4 5">Product of a dubious gene prediction unlikely to encode a functional protein. Was originally (PubMed:7992502) thought to function in calcofluor white resistance, hence the name CWH36, but this phenotype was later (PubMed:14594803) attributed to the overlapping gene VMA9. Because of that it is not part of the S.cerevisiae S288c complete/reference proteome set.</text>
</comment>
<accession>P25603</accession>
<proteinExistence type="uncertain"/>
<sequence length="130" mass="15469">MELAKERNGPHQKHHGQCQNHCTSPNTVRQNKTNKLLLVKKKGKLVIWRHIVKKMLHIRLVVLWSHYPEQHGHGTNHYEYTNNSIAKLDAQRVSRRRRKKREAERRDYDTYKLLITLCSLLFVGPLFLKV</sequence>